<evidence type="ECO:0000255" key="1">
    <source>
        <dbReference type="PROSITE-ProRule" id="PRU00114"/>
    </source>
</evidence>
<evidence type="ECO:0000269" key="2">
    <source>
    </source>
</evidence>
<evidence type="ECO:0000269" key="3">
    <source>
    </source>
</evidence>
<evidence type="ECO:0000303" key="4">
    <source>
    </source>
</evidence>
<evidence type="ECO:0000303" key="5">
    <source>
    </source>
</evidence>
<evidence type="ECO:0000303" key="6">
    <source>
    </source>
</evidence>
<evidence type="ECO:0007829" key="7">
    <source>
        <dbReference type="PDB" id="1DQQ"/>
    </source>
</evidence>
<evidence type="ECO:0007829" key="8">
    <source>
        <dbReference type="PDB" id="1YEC"/>
    </source>
</evidence>
<evidence type="ECO:0007829" key="9">
    <source>
        <dbReference type="PDB" id="3OZ9"/>
    </source>
</evidence>
<evidence type="ECO:0007829" key="10">
    <source>
        <dbReference type="PDB" id="5VAA"/>
    </source>
</evidence>
<protein>
    <recommendedName>
        <fullName>Ig gamma-2A chain C region, A allele</fullName>
    </recommendedName>
    <alternativeName>
        <fullName>Immunoglobulin heavy chain gamma polypeptide</fullName>
    </alternativeName>
</protein>
<gene>
    <name type="primary">Ighg</name>
</gene>
<proteinExistence type="evidence at protein level"/>
<sequence length="330" mass="36389">AKTTAPSVYPLAPVCGDTTGSSVTLGCLVKGYFPEPVTLTWNSGSLSSGVHTFPAVLQSDLYTLSSSVTVTSSTWPSQSITCNVAHPASSTKVDKKIEPRGPTIKPCPPCKCPAPNLLGGPSVFIFPPKIKDVLMISLSPIVTCVVVDVSEDDPDVQISWFVNNVEVHTAQTQTHREDYNSTLRVVSALPIQHQDWMSGKEFKCKVNNKDLPAPIERTISKPKGSVRAPQVYVLPPPEEEMTKKQVTLTCMVTDFMPEDIYVEWTNNGKTELNYKNTEPVLDSDGSYFMYSKLRVEKKNWVERNSYSCSVVHEGLHNHHTTKSFSRTPGK</sequence>
<name>GCAA_MOUSE</name>
<keyword id="KW-0002">3D-structure</keyword>
<keyword id="KW-1015">Disulfide bond</keyword>
<keyword id="KW-0325">Glycoprotein</keyword>
<keyword id="KW-0393">Immunoglobulin domain</keyword>
<keyword id="KW-1185">Reference proteome</keyword>
<keyword id="KW-0677">Repeat</keyword>
<reference key="1">
    <citation type="journal article" date="1980" name="Nucleic Acids Res.">
        <title>Structure of the constant and 3' untranslated regions of the murine Balb/c gamma 2a heavy chain messenger RNA.</title>
        <authorList>
            <person name="Sikorav J.-L."/>
            <person name="Auffray C."/>
            <person name="Rougeon F."/>
        </authorList>
    </citation>
    <scope>NUCLEOTIDE SEQUENCE [MRNA]</scope>
    <source>
        <strain evidence="5">BALB/cJ</strain>
    </source>
</reference>
<reference key="2">
    <citation type="journal article" date="1981" name="Nucleic Acids Res.">
        <title>The complete nucleotide sequence of mouse immunoglobin gamma 2a gene and evolution of heavy chain genes: further evidence for intervening sequence-mediated domain transfer.</title>
        <authorList>
            <person name="Yamawaki-Kataoka Y."/>
            <person name="Miyata T."/>
            <person name="Honjo T."/>
        </authorList>
    </citation>
    <scope>NUCLEOTIDE SEQUENCE [MRNA]</scope>
    <source>
        <strain evidence="4">BALB/cJ</strain>
    </source>
</reference>
<reference key="3">
    <citation type="journal article" date="1981" name="Proc. Natl. Acad. Sci. U.S.A.">
        <title>Comparison of mouse immunoglobulin gamma 2a and gamma 2b chain genes suggests that exons can be exchanged between genes in a multigenic family.</title>
        <authorList>
            <person name="Ollo R."/>
            <person name="Auffray C."/>
            <person name="Morchamps C."/>
            <person name="Rougeon F."/>
        </authorList>
    </citation>
    <scope>NUCLEOTIDE SEQUENCE [MRNA]</scope>
    <source>
        <strain evidence="6">BALB/cJ</strain>
    </source>
</reference>
<reference key="4">
    <citation type="journal article" date="1974" name="Eur. J. Biochem.">
        <title>Determination of the primary structure of a mouse IgG2a immunoglobulin: amino-acid sequence of the Fc fragment. Implications for the evolution of immunoglobulin structure and function.</title>
        <authorList>
            <person name="Bourgois A."/>
            <person name="Fougereau M."/>
            <person name="Rocca-Serra J."/>
        </authorList>
    </citation>
    <scope>MYELOMA PROTEIN MOPC 173</scope>
</reference>
<reference key="5">
    <citation type="journal article" date="1972" name="Eur. J. Biochem.">
        <title>Determination of the primary structure of a mouse gamma G2a immunoglobulin. Identification of the disulfide bridges.</title>
        <authorList>
            <person name="de Preval C."/>
            <person name="Fougereau M."/>
        </authorList>
    </citation>
    <scope>DISULFIDE BONDS</scope>
</reference>
<reference key="6">
    <citation type="journal article" date="2007" name="J. Proteome Res.">
        <title>Enhanced analysis of the mouse plasma proteome using cysteine-containing tryptic glycopeptides.</title>
        <authorList>
            <person name="Bernhard O.K."/>
            <person name="Kapp E.A."/>
            <person name="Simpson R.J."/>
        </authorList>
    </citation>
    <scope>GLYCOSYLATION [LARGE SCALE ANALYSIS] AT ASN-180</scope>
    <source>
        <strain>C57BL/6J</strain>
        <tissue>Plasma</tissue>
    </source>
</reference>
<feature type="chain" id="PRO_0000153584" description="Ig gamma-2A chain C region, A allele">
    <location>
        <begin position="1" status="less than"/>
        <end position="330"/>
    </location>
</feature>
<feature type="domain" description="Ig-like 1">
    <location>
        <begin position="6"/>
        <end position="98"/>
    </location>
</feature>
<feature type="domain" description="Ig-like 2">
    <location>
        <begin position="121"/>
        <end position="220"/>
    </location>
</feature>
<feature type="domain" description="Ig-like 3">
    <location>
        <begin position="229"/>
        <end position="325"/>
    </location>
</feature>
<feature type="glycosylation site" description="N-linked (GlcNAc...) asparagine" evidence="2">
    <location>
        <position position="180"/>
    </location>
</feature>
<feature type="disulfide bond" description="Interchain (with a light chain)" evidence="1 3">
    <location>
        <position position="15"/>
    </location>
</feature>
<feature type="disulfide bond" evidence="1 3">
    <location>
        <begin position="27"/>
        <end position="82"/>
    </location>
</feature>
<feature type="disulfide bond" description="Interchain (with a heavy chain)" evidence="1 3">
    <location>
        <position position="107"/>
    </location>
</feature>
<feature type="disulfide bond" description="Interchain (with a heavy chain)" evidence="1 3">
    <location>
        <position position="110"/>
    </location>
</feature>
<feature type="disulfide bond" description="Interchain (with a heavy chain)" evidence="1 3">
    <location>
        <position position="112"/>
    </location>
</feature>
<feature type="disulfide bond" evidence="1 3">
    <location>
        <begin position="144"/>
        <end position="204"/>
    </location>
</feature>
<feature type="disulfide bond" evidence="1 3">
    <location>
        <begin position="250"/>
        <end position="308"/>
    </location>
</feature>
<feature type="non-terminal residue">
    <location>
        <position position="1"/>
    </location>
</feature>
<feature type="strand" evidence="9">
    <location>
        <begin position="7"/>
        <end position="11"/>
    </location>
</feature>
<feature type="helix" evidence="7">
    <location>
        <begin position="15"/>
        <end position="17"/>
    </location>
</feature>
<feature type="turn" evidence="8">
    <location>
        <begin position="19"/>
        <end position="21"/>
    </location>
</feature>
<feature type="strand" evidence="9">
    <location>
        <begin position="22"/>
        <end position="35"/>
    </location>
</feature>
<feature type="strand" evidence="9">
    <location>
        <begin position="38"/>
        <end position="41"/>
    </location>
</feature>
<feature type="helix" evidence="9">
    <location>
        <begin position="42"/>
        <end position="44"/>
    </location>
</feature>
<feature type="strand" evidence="9">
    <location>
        <begin position="50"/>
        <end position="58"/>
    </location>
</feature>
<feature type="strand" evidence="9">
    <location>
        <begin position="61"/>
        <end position="71"/>
    </location>
</feature>
<feature type="turn" evidence="9">
    <location>
        <begin position="72"/>
        <end position="77"/>
    </location>
</feature>
<feature type="strand" evidence="9">
    <location>
        <begin position="81"/>
        <end position="86"/>
    </location>
</feature>
<feature type="helix" evidence="9">
    <location>
        <begin position="87"/>
        <end position="89"/>
    </location>
</feature>
<feature type="strand" evidence="9">
    <location>
        <begin position="91"/>
        <end position="96"/>
    </location>
</feature>
<feature type="strand" evidence="10">
    <location>
        <begin position="122"/>
        <end position="126"/>
    </location>
</feature>
<feature type="helix" evidence="10">
    <location>
        <begin position="130"/>
        <end position="134"/>
    </location>
</feature>
<feature type="strand" evidence="10">
    <location>
        <begin position="141"/>
        <end position="149"/>
    </location>
</feature>
<feature type="strand" evidence="10">
    <location>
        <begin position="157"/>
        <end position="162"/>
    </location>
</feature>
<feature type="strand" evidence="10">
    <location>
        <begin position="165"/>
        <end position="167"/>
    </location>
</feature>
<feature type="strand" evidence="10">
    <location>
        <begin position="171"/>
        <end position="177"/>
    </location>
</feature>
<feature type="turn" evidence="10">
    <location>
        <begin position="178"/>
        <end position="181"/>
    </location>
</feature>
<feature type="strand" evidence="10">
    <location>
        <begin position="182"/>
        <end position="190"/>
    </location>
</feature>
<feature type="helix" evidence="10">
    <location>
        <begin position="193"/>
        <end position="197"/>
    </location>
</feature>
<feature type="strand" evidence="10">
    <location>
        <begin position="202"/>
        <end position="207"/>
    </location>
</feature>
<feature type="strand" evidence="10">
    <location>
        <begin position="215"/>
        <end position="219"/>
    </location>
</feature>
<feature type="strand" evidence="10">
    <location>
        <begin position="230"/>
        <end position="234"/>
    </location>
</feature>
<feature type="helix" evidence="10">
    <location>
        <begin position="238"/>
        <end position="242"/>
    </location>
</feature>
<feature type="strand" evidence="10">
    <location>
        <begin position="243"/>
        <end position="258"/>
    </location>
</feature>
<feature type="strand" evidence="10">
    <location>
        <begin position="261"/>
        <end position="266"/>
    </location>
</feature>
<feature type="strand" evidence="10">
    <location>
        <begin position="272"/>
        <end position="276"/>
    </location>
</feature>
<feature type="strand" evidence="10">
    <location>
        <begin position="287"/>
        <end position="296"/>
    </location>
</feature>
<feature type="helix" evidence="10">
    <location>
        <begin position="297"/>
        <end position="301"/>
    </location>
</feature>
<feature type="strand" evidence="10">
    <location>
        <begin position="307"/>
        <end position="311"/>
    </location>
</feature>
<feature type="helix" evidence="10">
    <location>
        <begin position="316"/>
        <end position="318"/>
    </location>
</feature>
<feature type="strand" evidence="10">
    <location>
        <begin position="319"/>
        <end position="324"/>
    </location>
</feature>
<organism>
    <name type="scientific">Mus musculus</name>
    <name type="common">Mouse</name>
    <dbReference type="NCBI Taxonomy" id="10090"/>
    <lineage>
        <taxon>Eukaryota</taxon>
        <taxon>Metazoa</taxon>
        <taxon>Chordata</taxon>
        <taxon>Craniata</taxon>
        <taxon>Vertebrata</taxon>
        <taxon>Euteleostomi</taxon>
        <taxon>Mammalia</taxon>
        <taxon>Eutheria</taxon>
        <taxon>Euarchontoglires</taxon>
        <taxon>Glires</taxon>
        <taxon>Rodentia</taxon>
        <taxon>Myomorpha</taxon>
        <taxon>Muroidea</taxon>
        <taxon>Muridae</taxon>
        <taxon>Murinae</taxon>
        <taxon>Mus</taxon>
        <taxon>Mus</taxon>
    </lineage>
</organism>
<dbReference type="EMBL" id="V00798">
    <property type="protein sequence ID" value="CAA24178.1"/>
    <property type="molecule type" value="mRNA"/>
</dbReference>
<dbReference type="PIR" id="A02152">
    <property type="entry name" value="G2MSA"/>
</dbReference>
<dbReference type="PDB" id="1DQM">
    <property type="method" value="X-ray"/>
    <property type="resolution" value="2.10 A"/>
    <property type="chains" value="H=1-97"/>
</dbReference>
<dbReference type="PDB" id="1DQQ">
    <property type="method" value="X-ray"/>
    <property type="resolution" value="1.80 A"/>
    <property type="chains" value="B/D=1-97"/>
</dbReference>
<dbReference type="PDB" id="1EHL">
    <property type="method" value="X-ray"/>
    <property type="resolution" value="2.40 A"/>
    <property type="chains" value="H=1-99"/>
</dbReference>
<dbReference type="PDB" id="1FE8">
    <property type="method" value="X-ray"/>
    <property type="resolution" value="2.03 A"/>
    <property type="chains" value="H/I/J=1-101"/>
</dbReference>
<dbReference type="PDB" id="1GGI">
    <property type="method" value="X-ray"/>
    <property type="resolution" value="2.80 A"/>
    <property type="chains" value="H/J=1-107"/>
</dbReference>
<dbReference type="PDB" id="1IGT">
    <property type="method" value="X-ray"/>
    <property type="resolution" value="2.80 A"/>
    <property type="chains" value="B/D=2-326"/>
</dbReference>
<dbReference type="PDB" id="1KEG">
    <property type="method" value="X-ray"/>
    <property type="resolution" value="2.40 A"/>
    <property type="chains" value="H=1-100"/>
</dbReference>
<dbReference type="PDB" id="1KN2">
    <property type="method" value="X-ray"/>
    <property type="resolution" value="1.90 A"/>
    <property type="chains" value="H=1-99"/>
</dbReference>
<dbReference type="PDB" id="1KN4">
    <property type="method" value="X-ray"/>
    <property type="resolution" value="1.90 A"/>
    <property type="chains" value="H=1-99"/>
</dbReference>
<dbReference type="PDB" id="1KNO">
    <property type="method" value="X-ray"/>
    <property type="resolution" value="3.20 A"/>
    <property type="chains" value="B/D/F=1-101"/>
</dbReference>
<dbReference type="PDB" id="1MH5">
    <property type="method" value="X-ray"/>
    <property type="resolution" value="2.10 A"/>
    <property type="chains" value="B/H=1-111"/>
</dbReference>
<dbReference type="PDB" id="1MNU">
    <property type="method" value="X-ray"/>
    <property type="resolution" value="2.50 A"/>
    <property type="chains" value="H=1-104"/>
</dbReference>
<dbReference type="PDB" id="1MPA">
    <property type="method" value="X-ray"/>
    <property type="resolution" value="2.60 A"/>
    <property type="chains" value="H=1-104"/>
</dbReference>
<dbReference type="PDB" id="1OB1">
    <property type="method" value="X-ray"/>
    <property type="resolution" value="2.90 A"/>
    <property type="chains" value="B/E=1-99"/>
</dbReference>
<dbReference type="PDB" id="1PG7">
    <property type="method" value="X-ray"/>
    <property type="resolution" value="2.50 A"/>
    <property type="chains" value="X/Z=1-100"/>
</dbReference>
<dbReference type="PDB" id="1UYW">
    <property type="method" value="X-ray"/>
    <property type="resolution" value="2.00 A"/>
    <property type="chains" value="H/M=1-100"/>
</dbReference>
<dbReference type="PDB" id="1YEC">
    <property type="method" value="X-ray"/>
    <property type="resolution" value="1.90 A"/>
    <property type="chains" value="H=1-99"/>
</dbReference>
<dbReference type="PDB" id="1YEF">
    <property type="method" value="X-ray"/>
    <property type="resolution" value="2.00 A"/>
    <property type="chains" value="H=1-99"/>
</dbReference>
<dbReference type="PDB" id="1YEG">
    <property type="method" value="X-ray"/>
    <property type="resolution" value="2.00 A"/>
    <property type="chains" value="H=1-99"/>
</dbReference>
<dbReference type="PDB" id="1YEH">
    <property type="method" value="X-ray"/>
    <property type="resolution" value="2.55 A"/>
    <property type="chains" value="H=1-99"/>
</dbReference>
<dbReference type="PDB" id="1YEI">
    <property type="method" value="X-ray"/>
    <property type="resolution" value="1.90 A"/>
    <property type="chains" value="H=1-99"/>
</dbReference>
<dbReference type="PDB" id="1YEJ">
    <property type="method" value="X-ray"/>
    <property type="resolution" value="1.85 A"/>
    <property type="chains" value="H=1-99"/>
</dbReference>
<dbReference type="PDB" id="1YEK">
    <property type="method" value="X-ray"/>
    <property type="resolution" value="2.10 A"/>
    <property type="chains" value="H=1-99"/>
</dbReference>
<dbReference type="PDB" id="2IPU">
    <property type="method" value="X-ray"/>
    <property type="resolution" value="1.65 A"/>
    <property type="chains" value="G/H=1-103"/>
</dbReference>
<dbReference type="PDB" id="2MPA">
    <property type="method" value="X-ray"/>
    <property type="resolution" value="2.60 A"/>
    <property type="chains" value="H=1-104"/>
</dbReference>
<dbReference type="PDB" id="2R0W">
    <property type="method" value="X-ray"/>
    <property type="resolution" value="2.50 A"/>
    <property type="chains" value="H=1-100"/>
</dbReference>
<dbReference type="PDB" id="2R0Z">
    <property type="method" value="X-ray"/>
    <property type="resolution" value="2.10 A"/>
    <property type="chains" value="H=1-100"/>
</dbReference>
<dbReference type="PDB" id="2R29">
    <property type="method" value="X-ray"/>
    <property type="resolution" value="3.00 A"/>
    <property type="chains" value="H=1-100"/>
</dbReference>
<dbReference type="PDB" id="2R69">
    <property type="method" value="X-ray"/>
    <property type="resolution" value="3.80 A"/>
    <property type="chains" value="H=1-100"/>
</dbReference>
<dbReference type="PDB" id="2R6P">
    <property type="method" value="EM"/>
    <property type="resolution" value="24.00 A"/>
    <property type="chains" value="D/F=1-100"/>
</dbReference>
<dbReference type="PDB" id="2VL5">
    <property type="method" value="X-ray"/>
    <property type="resolution" value="2.10 A"/>
    <property type="chains" value="A/C=1-99"/>
</dbReference>
<dbReference type="PDB" id="2ZCH">
    <property type="method" value="X-ray"/>
    <property type="resolution" value="2.83 A"/>
    <property type="chains" value="H=1-107"/>
</dbReference>
<dbReference type="PDB" id="2ZCK">
    <property type="method" value="X-ray"/>
    <property type="resolution" value="3.10 A"/>
    <property type="chains" value="H=1-107"/>
</dbReference>
<dbReference type="PDB" id="2ZCL">
    <property type="method" value="X-ray"/>
    <property type="resolution" value="3.25 A"/>
    <property type="chains" value="H=1-107"/>
</dbReference>
<dbReference type="PDB" id="3BGF">
    <property type="method" value="X-ray"/>
    <property type="resolution" value="3.00 A"/>
    <property type="chains" value="B/H=1-99"/>
</dbReference>
<dbReference type="PDB" id="3OZ9">
    <property type="method" value="X-ray"/>
    <property type="resolution" value="1.60 A"/>
    <property type="chains" value="H=1-100"/>
</dbReference>
<dbReference type="PDB" id="3ZO0">
    <property type="method" value="X-ray"/>
    <property type="resolution" value="1.99 A"/>
    <property type="chains" value="A=120-326"/>
</dbReference>
<dbReference type="PDB" id="4F37">
    <property type="method" value="X-ray"/>
    <property type="resolution" value="2.57 A"/>
    <property type="chains" value="F/H=1-100"/>
</dbReference>
<dbReference type="PDB" id="4KVC">
    <property type="method" value="X-ray"/>
    <property type="resolution" value="2.31 A"/>
    <property type="chains" value="H=1-100"/>
</dbReference>
<dbReference type="PDB" id="5VAA">
    <property type="method" value="X-ray"/>
    <property type="resolution" value="1.55 A"/>
    <property type="chains" value="A/B=107-330"/>
</dbReference>
<dbReference type="PDB" id="8AQW">
    <property type="method" value="EM"/>
    <property type="resolution" value="3.30 A"/>
    <property type="chains" value="A=98-330"/>
</dbReference>
<dbReference type="PDBsum" id="1DQM"/>
<dbReference type="PDBsum" id="1DQQ"/>
<dbReference type="PDBsum" id="1EHL"/>
<dbReference type="PDBsum" id="1FE8"/>
<dbReference type="PDBsum" id="1GGI"/>
<dbReference type="PDBsum" id="1IGT"/>
<dbReference type="PDBsum" id="1KEG"/>
<dbReference type="PDBsum" id="1KN2"/>
<dbReference type="PDBsum" id="1KN4"/>
<dbReference type="PDBsum" id="1KNO"/>
<dbReference type="PDBsum" id="1MH5"/>
<dbReference type="PDBsum" id="1MNU"/>
<dbReference type="PDBsum" id="1MPA"/>
<dbReference type="PDBsum" id="1OB1"/>
<dbReference type="PDBsum" id="1PG7"/>
<dbReference type="PDBsum" id="1UYW"/>
<dbReference type="PDBsum" id="1YEC"/>
<dbReference type="PDBsum" id="1YEF"/>
<dbReference type="PDBsum" id="1YEG"/>
<dbReference type="PDBsum" id="1YEH"/>
<dbReference type="PDBsum" id="1YEI"/>
<dbReference type="PDBsum" id="1YEJ"/>
<dbReference type="PDBsum" id="1YEK"/>
<dbReference type="PDBsum" id="2IPU"/>
<dbReference type="PDBsum" id="2MPA"/>
<dbReference type="PDBsum" id="2R0W"/>
<dbReference type="PDBsum" id="2R0Z"/>
<dbReference type="PDBsum" id="2R29"/>
<dbReference type="PDBsum" id="2R69"/>
<dbReference type="PDBsum" id="2R6P"/>
<dbReference type="PDBsum" id="2VL5"/>
<dbReference type="PDBsum" id="2ZCH"/>
<dbReference type="PDBsum" id="2ZCK"/>
<dbReference type="PDBsum" id="2ZCL"/>
<dbReference type="PDBsum" id="3BGF"/>
<dbReference type="PDBsum" id="3OZ9"/>
<dbReference type="PDBsum" id="3ZO0"/>
<dbReference type="PDBsum" id="4F37"/>
<dbReference type="PDBsum" id="4KVC"/>
<dbReference type="PDBsum" id="5VAA"/>
<dbReference type="PDBsum" id="8AQW"/>
<dbReference type="EMDB" id="EMD-0196"/>
<dbReference type="EMDB" id="EMD-0341"/>
<dbReference type="EMDB" id="EMD-0342"/>
<dbReference type="EMDB" id="EMD-0869"/>
<dbReference type="EMDB" id="EMD-11666"/>
<dbReference type="EMDB" id="EMD-11667"/>
<dbReference type="EMDB" id="EMD-11670"/>
<dbReference type="EMDB" id="EMD-11671"/>
<dbReference type="EMDB" id="EMD-11672"/>
<dbReference type="EMDB" id="EMD-12290"/>
<dbReference type="EMDB" id="EMD-12295"/>
<dbReference type="EMDB" id="EMD-12300"/>
<dbReference type="EMDB" id="EMD-12765"/>
<dbReference type="EMDB" id="EMD-15592"/>
<dbReference type="EMDB" id="EMD-17344"/>
<dbReference type="EMDB" id="EMD-17345"/>
<dbReference type="EMDB" id="EMD-17537"/>
<dbReference type="EMDB" id="EMD-17547"/>
<dbReference type="EMDB" id="EMD-18003"/>
<dbReference type="EMDB" id="EMD-18016"/>
<dbReference type="EMDB" id="EMD-18210"/>
<dbReference type="EMDB" id="EMD-18330"/>
<dbReference type="EMDB" id="EMD-19978"/>
<dbReference type="EMDB" id="EMD-19979"/>
<dbReference type="EMDB" id="EMD-20795"/>
<dbReference type="EMDB" id="EMD-20796"/>
<dbReference type="EMDB" id="EMD-21460"/>
<dbReference type="EMDB" id="EMD-21539"/>
<dbReference type="EMDB" id="EMD-21599"/>
<dbReference type="EMDB" id="EMD-21684"/>
<dbReference type="EMDB" id="EMD-25762"/>
<dbReference type="EMDB" id="EMD-27497"/>
<dbReference type="EMDB" id="EMD-27498"/>
<dbReference type="EMDB" id="EMD-27499"/>
<dbReference type="EMDB" id="EMD-29020"/>
<dbReference type="EMDB" id="EMD-29021"/>
<dbReference type="EMDB" id="EMD-30476"/>
<dbReference type="EMDB" id="EMD-30477"/>
<dbReference type="EMDB" id="EMD-30478"/>
<dbReference type="EMDB" id="EMD-30479"/>
<dbReference type="EMDB" id="EMD-30480"/>
<dbReference type="EMDB" id="EMD-30787"/>
<dbReference type="EMDB" id="EMD-31054"/>
<dbReference type="EMDB" id="EMD-31055"/>
<dbReference type="EMDB" id="EMD-31060"/>
<dbReference type="EMDB" id="EMD-33286"/>
<dbReference type="EMDB" id="EMD-33559"/>
<dbReference type="EMDB" id="EMD-34167"/>
<dbReference type="EMDB" id="EMD-3654"/>
<dbReference type="EMDB" id="EMD-38986"/>
<dbReference type="EMDB" id="EMD-38987"/>
<dbReference type="EMDB" id="EMD-3953"/>
<dbReference type="EMDB" id="EMD-41845"/>
<dbReference type="EMDB" id="EMD-4246"/>
<dbReference type="EMDB" id="EMD-4281"/>
<dbReference type="EMDB" id="EMD-4282"/>
<dbReference type="EMDB" id="EMD-43048"/>
<dbReference type="EMDB" id="EMD-43204"/>
<dbReference type="EMDB" id="EMD-43205"/>
<dbReference type="EMDB" id="EMD-43206"/>
<dbReference type="EMDB" id="EMD-43207"/>
<dbReference type="EMDB" id="EMD-43208"/>
<dbReference type="EMDB" id="EMD-43209"/>
<dbReference type="EMDB" id="EMD-43210"/>
<dbReference type="EMDB" id="EMD-43211"/>
<dbReference type="EMDB" id="EMD-43969"/>
<dbReference type="EMDB" id="EMD-44407"/>
<dbReference type="EMDB" id="EMD-44408"/>
<dbReference type="EMDB" id="EMD-4536"/>
<dbReference type="EMDB" id="EMD-4539"/>
<dbReference type="EMDB" id="EMD-46596"/>
<dbReference type="EMDB" id="EMD-6854"/>
<dbReference type="EMDB" id="EMD-6855"/>
<dbReference type="EMDB" id="EMD-7939"/>
<dbReference type="EMDB" id="EMD-9249"/>
<dbReference type="EMDB" id="EMD-9274"/>
<dbReference type="EMDB" id="EMD-9275"/>
<dbReference type="EMDB" id="EMD-9278"/>
<dbReference type="EMDB" id="EMD-9279"/>
<dbReference type="SMR" id="P01863"/>
<dbReference type="FunCoup" id="P01863">
    <property type="interactions" value="57"/>
</dbReference>
<dbReference type="GlyCosmos" id="P01863">
    <property type="glycosylation" value="1 site, No reported glycans"/>
</dbReference>
<dbReference type="GlyGen" id="P01863">
    <property type="glycosylation" value="1 site"/>
</dbReference>
<dbReference type="iPTMnet" id="P01863"/>
<dbReference type="SwissPalm" id="P01863"/>
<dbReference type="jPOST" id="P01863"/>
<dbReference type="PeptideAtlas" id="P01863"/>
<dbReference type="ABCD" id="P01863">
    <property type="antibodies" value="12 sequenced antibodies"/>
</dbReference>
<dbReference type="AGR" id="MGI:2144967"/>
<dbReference type="MGI" id="MGI:2144967">
    <property type="gene designation" value="Ighg"/>
</dbReference>
<dbReference type="InParanoid" id="P01863"/>
<dbReference type="EvolutionaryTrace" id="P01863"/>
<dbReference type="PRO" id="PR:P01863"/>
<dbReference type="Proteomes" id="UP000000589">
    <property type="component" value="Unplaced"/>
</dbReference>
<dbReference type="RNAct" id="P01863">
    <property type="molecule type" value="protein"/>
</dbReference>
<dbReference type="GO" id="GO:0034987">
    <property type="term" value="F:immunoglobulin receptor binding"/>
    <property type="evidence" value="ECO:0000353"/>
    <property type="project" value="AgBase"/>
</dbReference>
<dbReference type="CDD" id="cd21817">
    <property type="entry name" value="IgC1_CH1_IgEG"/>
    <property type="match status" value="1"/>
</dbReference>
<dbReference type="CDD" id="cd05768">
    <property type="entry name" value="IgC1_CH3_IgAGD_CH4_IgAEM"/>
    <property type="match status" value="1"/>
</dbReference>
<dbReference type="FunFam" id="2.60.40.10:FF:001739">
    <property type="entry name" value="Ig gamma-2A chain C region"/>
    <property type="match status" value="1"/>
</dbReference>
<dbReference type="FunFam" id="2.60.40.10:FF:000463">
    <property type="entry name" value="Immunoglobulin heavy constant gamma 1"/>
    <property type="match status" value="1"/>
</dbReference>
<dbReference type="FunFam" id="2.60.40.10:FF:001129">
    <property type="entry name" value="Immunoglobulin heavy constant gamma 1"/>
    <property type="match status" value="1"/>
</dbReference>
<dbReference type="Gene3D" id="2.60.40.10">
    <property type="entry name" value="Immunoglobulins"/>
    <property type="match status" value="3"/>
</dbReference>
<dbReference type="InterPro" id="IPR007110">
    <property type="entry name" value="Ig-like_dom"/>
</dbReference>
<dbReference type="InterPro" id="IPR036179">
    <property type="entry name" value="Ig-like_dom_sf"/>
</dbReference>
<dbReference type="InterPro" id="IPR013783">
    <property type="entry name" value="Ig-like_fold"/>
</dbReference>
<dbReference type="InterPro" id="IPR003006">
    <property type="entry name" value="Ig/MHC_CS"/>
</dbReference>
<dbReference type="InterPro" id="IPR003597">
    <property type="entry name" value="Ig_C1-set"/>
</dbReference>
<dbReference type="InterPro" id="IPR050380">
    <property type="entry name" value="Immune_Resp_Modulators"/>
</dbReference>
<dbReference type="PANTHER" id="PTHR23411">
    <property type="entry name" value="TAPASIN"/>
    <property type="match status" value="1"/>
</dbReference>
<dbReference type="Pfam" id="PF07654">
    <property type="entry name" value="C1-set"/>
    <property type="match status" value="3"/>
</dbReference>
<dbReference type="SMART" id="SM00407">
    <property type="entry name" value="IGc1"/>
    <property type="match status" value="3"/>
</dbReference>
<dbReference type="SUPFAM" id="SSF48726">
    <property type="entry name" value="Immunoglobulin"/>
    <property type="match status" value="3"/>
</dbReference>
<dbReference type="PROSITE" id="PS50835">
    <property type="entry name" value="IG_LIKE"/>
    <property type="match status" value="3"/>
</dbReference>
<dbReference type="PROSITE" id="PS00290">
    <property type="entry name" value="IG_MHC"/>
    <property type="match status" value="1"/>
</dbReference>
<accession>P01863</accession>